<protein>
    <recommendedName>
        <fullName>Adenylate cyclase type 6</fullName>
        <ecNumber evidence="9 10 11 12 13">4.6.1.1</ecNumber>
    </recommendedName>
    <alternativeName>
        <fullName>ATP pyrophosphate-lyase 6</fullName>
    </alternativeName>
    <alternativeName>
        <fullName>Adenylate cyclase type VI</fullName>
        <shortName>ACVI</shortName>
    </alternativeName>
    <alternativeName>
        <fullName>Adenylyl cyclase 6</fullName>
        <shortName evidence="14">AC6</shortName>
    </alternativeName>
    <alternativeName>
        <fullName>Ca(2+)-inhibitable adenylyl cyclase</fullName>
    </alternativeName>
</protein>
<sequence length="1166" mass="130506">MSWFSGLLVPKVDERKTAWGERNGQKRPRQATRARGFCAPRYMSCLKNVEPPSPTPAARTRCPWQDEAFIRRAGPGRGVKLGLRSVALGFDDTEVTTPMGTAEVAPDTSPRSGPSCWHRLAQVFQSKQFRSAKLERLYQRYFFQMNQSSLTLLMAVLVLLMAVLLTFHAAPALPQPAYVALLTCASVLFVVLMVVCNRHSFRQDSMWVVSYVVLGILAAVQVGGALAANPRSPSAGLWCPVFFVYITYTLLPIRMRAAVLSGLGLSTLHLILAWHLNNGDPFLWKQLGANVVLFLCTNAIGVCTHYPAEVSQRQAFQETRGYIQARLHLQHENRQQERLLLSVLPQHVAMEMKEDINTKKEDMMFHKIYIQKHDNVSILFADIEGFTSLASQCTAQELVMTLNELFARFDKLAAENHCLRIKILGDCYYCVSGLPEARADHAHCCVEMGVDMIEAISLVREVTGVNVNMRVGIHSGRVHCGVLGLRKWQFDVWSNDVTLANHMEAGGRAGRIHITRATLQYLNGDYEVEPGRGGERNGYLKEQCIETFLILGASQKRKEEKAMLVKLQRTRANSMEGLMPRWVPDRAFSRTKDSKAFRQMGIDDSSKENRGAQDALNPEDEVDEFLGRAIDARSIDQLRKDHVRRFLLTFQREDLEKKYSRKVDPRFGAYVACALLVFCFICFIQFLVFPHSALILGIYAGIFLLLLVTVLICAVCSCGSFFPNALQRLSRSIVRSRVHSTAVGVFSVLLVFISAIANMFTCSHTPLRTCAARMLNLTPSDVTACHLRQINYSLGLEAPLCEGTAPTCSFPEYFVGSVLLSLLASSVFLHISSIGKLVMTFVLGFIYLLLLLLGPPATIFDNYDLLLSVHGLASSNETFDGLDCPAVGRVALKYMTPVILLVFALALYLHAQQVESTARLDFLWKLQATGEKEEMEELQAYNRRLLHNILPKDVAAHFLARERRNDELYYQSCECVAVMFASIANFSEFYVELEANNEGVECLRLLNEIIADFDEIISEERFRQLEKIKTIGSTYMAASGLNASTYDQVGRSHITALADYAMRLMEQMKHINEHSFNNFQMKIGLNMGPVVAGVIGARKPQYDIWGNTVNVSSRMDSTGVPDRIQVTTDLYQVLAAKGYQLECRGVVKVKGKGEMTTYFLNGGPSS</sequence>
<evidence type="ECO:0000250" key="1">
    <source>
        <dbReference type="UniProtKB" id="O43306"/>
    </source>
</evidence>
<evidence type="ECO:0000250" key="2">
    <source>
        <dbReference type="UniProtKB" id="P26769"/>
    </source>
</evidence>
<evidence type="ECO:0000250" key="3">
    <source>
        <dbReference type="UniProtKB" id="P30803"/>
    </source>
</evidence>
<evidence type="ECO:0000250" key="4">
    <source>
        <dbReference type="UniProtKB" id="P30804"/>
    </source>
</evidence>
<evidence type="ECO:0000250" key="5">
    <source>
        <dbReference type="UniProtKB" id="Q01341"/>
    </source>
</evidence>
<evidence type="ECO:0000255" key="6"/>
<evidence type="ECO:0000255" key="7">
    <source>
        <dbReference type="PROSITE-ProRule" id="PRU00099"/>
    </source>
</evidence>
<evidence type="ECO:0000269" key="8">
    <source>
    </source>
</evidence>
<evidence type="ECO:0000269" key="9">
    <source>
    </source>
</evidence>
<evidence type="ECO:0000269" key="10">
    <source>
    </source>
</evidence>
<evidence type="ECO:0000269" key="11">
    <source>
    </source>
</evidence>
<evidence type="ECO:0000269" key="12">
    <source>
    </source>
</evidence>
<evidence type="ECO:0000269" key="13">
    <source>
    </source>
</evidence>
<evidence type="ECO:0000303" key="14">
    <source>
    </source>
</evidence>
<evidence type="ECO:0000305" key="15"/>
<evidence type="ECO:0007744" key="16">
    <source>
    </source>
</evidence>
<keyword id="KW-0067">ATP-binding</keyword>
<keyword id="KW-0115">cAMP biosynthesis</keyword>
<keyword id="KW-1003">Cell membrane</keyword>
<keyword id="KW-0966">Cell projection</keyword>
<keyword id="KW-0969">Cilium</keyword>
<keyword id="KW-0325">Glycoprotein</keyword>
<keyword id="KW-0456">Lyase</keyword>
<keyword id="KW-0460">Magnesium</keyword>
<keyword id="KW-0464">Manganese</keyword>
<keyword id="KW-0472">Membrane</keyword>
<keyword id="KW-0479">Metal-binding</keyword>
<keyword id="KW-0547">Nucleotide-binding</keyword>
<keyword id="KW-0597">Phosphoprotein</keyword>
<keyword id="KW-1185">Reference proteome</keyword>
<keyword id="KW-0677">Repeat</keyword>
<keyword id="KW-0812">Transmembrane</keyword>
<keyword id="KW-1133">Transmembrane helix</keyword>
<comment type="function">
    <text evidence="1 5 9 10 11 12">Catalyzes the formation of the signaling molecule cAMP downstream of G protein-coupled receptors (PubMed:1409703, PubMed:15385642, PubMed:17110384, PubMed:21606183). Functions in signaling cascades downstream of beta-adrenergic receptors in the heart and in vascular smooth muscle cells (PubMed:21606183). Functions in signaling cascades downstream of the vasopressin receptor in the kidney and has a role in renal water reabsorption. Functions in signaling cascades downstream of PTH1R and plays a role in regulating renal phosphate excretion. Functions in signaling cascades downstream of the VIP and SCT receptors in pancreas and contributes to the regulation of pancreatic amylase and fluid secretion (By similarity). Signaling mediates cAMP-dependent activation of protein kinase PKA (PubMed:21606183). This promotes increased phosphorylation of various proteins, including AKT. Plays a role in regulating cardiac sarcoplasmic reticulum Ca(2+) uptake and storage, and is required for normal heart ventricular contractibility. May contribute to normal heart function (By similarity). Mediates vasodilatation after activation of beta-adrenergic receptors by isoproterenol (By similarity). Contributes to bone cell responses to mechanical stimuli (By similarity).</text>
</comment>
<comment type="catalytic activity">
    <reaction evidence="9 10 11 12 13">
        <text>ATP = 3',5'-cyclic AMP + diphosphate</text>
        <dbReference type="Rhea" id="RHEA:15389"/>
        <dbReference type="ChEBI" id="CHEBI:30616"/>
        <dbReference type="ChEBI" id="CHEBI:33019"/>
        <dbReference type="ChEBI" id="CHEBI:58165"/>
        <dbReference type="EC" id="4.6.1.1"/>
    </reaction>
</comment>
<comment type="cofactor">
    <cofactor evidence="10">
        <name>Mg(2+)</name>
        <dbReference type="ChEBI" id="CHEBI:18420"/>
    </cofactor>
    <cofactor evidence="10 13">
        <name>Mn(2+)</name>
        <dbReference type="ChEBI" id="CHEBI:29035"/>
    </cofactor>
    <text evidence="3">Binds 2 magnesium ions per subunit. Is also active with manganese (in vitro).</text>
</comment>
<comment type="activity regulation">
    <text evidence="4 5 10 11 13">Activated by G(s) G alpha protein GNAS (PubMed:17110384, PubMed:9391159). Inhibited by G(i) G alpha protein GNAI1 (By similarity). Is further activated by the complex formed by GNB1 and GNG2 (PubMed:17110384). Activated by forskolin (By similarity). Inhibited by calcium ions, already at micromolar concentrations (By similarity). Inhibited by adenosine, AMP and their analogs (By similarity). Phosphorylation by RAF1 results in its activation (PubMed:15385642).</text>
</comment>
<comment type="subunit">
    <text evidence="1 5 10">Part of a complex containing AKAP5, ADCY5, PDE4C and PKD2 (By similarity). Interacts with RAF1 (PubMed:15385642). Interacts (via cytoplasmic N-terminus) with GNAS, GNB1 and GNG2 (By similarity).</text>
</comment>
<comment type="subcellular location">
    <subcellularLocation>
        <location evidence="10 11 13">Cell membrane</location>
        <topology evidence="15">Multi-pass membrane protein</topology>
    </subcellularLocation>
    <subcellularLocation>
        <location evidence="5">Cell projection</location>
        <location evidence="5">Cilium</location>
    </subcellularLocation>
    <subcellularLocation>
        <location evidence="5">Cell projection</location>
        <location evidence="5">Stereocilium</location>
    </subcellularLocation>
</comment>
<comment type="tissue specificity">
    <text evidence="9 12">Detected in brain and kidney (PubMed:1409703). Detected in vascular smooth muscle cells (PubMed:21606183).</text>
</comment>
<comment type="domain">
    <text evidence="2">The protein contains two modules with six transmembrane helices each; both are required for catalytic activity. Isolated N-terminal or C-terminal guanylate cyclase domains have no catalytic activity, but when they are brought together, enzyme activity is restored. The active site is at the interface of the two domains. Both contribute substrate-binding residues, but the catalytic metal ions are bound exclusively via the N-terminal guanylate cyclase domain.</text>
</comment>
<comment type="PTM">
    <text evidence="8 10 13">Phosphorylation by RAF1 increases enzyme activity (PubMed:15385642). Phosphorylation by PKA on Ser-660 inhibits the GNAS-mediated increase in catalytic activity (PubMed:9391159). Phosphorylation by PKC on Ser-554, Ser-660 and Thr-917 inhibits catalytic activity (PubMed:11877398).</text>
</comment>
<comment type="similarity">
    <text evidence="7">Belongs to the adenylyl cyclase class-4/guanylyl cyclase family.</text>
</comment>
<comment type="sequence caution" evidence="15">
    <conflict type="erroneous initiation">
        <sequence resource="EMBL-CDS" id="AAA40678"/>
    </conflict>
    <text>Extended N-terminus.</text>
</comment>
<name>ADCY6_RAT</name>
<feature type="chain" id="PRO_0000195701" description="Adenylate cyclase type 6">
    <location>
        <begin position="1"/>
        <end position="1166"/>
    </location>
</feature>
<feature type="topological domain" description="Cytoplasmic" evidence="6">
    <location>
        <begin position="1"/>
        <end position="149"/>
    </location>
</feature>
<feature type="transmembrane region" description="Helical" evidence="6">
    <location>
        <begin position="150"/>
        <end position="166"/>
    </location>
</feature>
<feature type="transmembrane region" description="Helical" evidence="6">
    <location>
        <begin position="179"/>
        <end position="195"/>
    </location>
</feature>
<feature type="transmembrane region" description="Helical" evidence="6">
    <location>
        <begin position="212"/>
        <end position="228"/>
    </location>
</feature>
<feature type="transmembrane region" description="Helical" evidence="6">
    <location>
        <begin position="237"/>
        <end position="253"/>
    </location>
</feature>
<feature type="transmembrane region" description="Helical" evidence="6">
    <location>
        <begin position="257"/>
        <end position="273"/>
    </location>
</feature>
<feature type="transmembrane region" description="Helical" evidence="6">
    <location>
        <begin position="287"/>
        <end position="303"/>
    </location>
</feature>
<feature type="topological domain" description="Cytoplasmic" evidence="6">
    <location>
        <begin position="304"/>
        <end position="671"/>
    </location>
</feature>
<feature type="transmembrane region" description="Helical" evidence="6">
    <location>
        <begin position="672"/>
        <end position="689"/>
    </location>
</feature>
<feature type="transmembrane region" description="Helical" evidence="6">
    <location>
        <begin position="700"/>
        <end position="716"/>
    </location>
</feature>
<feature type="transmembrane region" description="Helical" evidence="6">
    <location>
        <begin position="741"/>
        <end position="757"/>
    </location>
</feature>
<feature type="topological domain" description="Extracellular" evidence="6">
    <location>
        <begin position="758"/>
        <end position="817"/>
    </location>
</feature>
<feature type="transmembrane region" description="Helical" evidence="6">
    <location>
        <begin position="818"/>
        <end position="834"/>
    </location>
</feature>
<feature type="transmembrane region" description="Helical" evidence="6">
    <location>
        <begin position="837"/>
        <end position="853"/>
    </location>
</feature>
<feature type="transmembrane region" description="Helical" evidence="6">
    <location>
        <begin position="895"/>
        <end position="911"/>
    </location>
</feature>
<feature type="topological domain" description="Cytoplasmic" evidence="6">
    <location>
        <begin position="912"/>
        <end position="1166"/>
    </location>
</feature>
<feature type="binding site" evidence="3">
    <location>
        <begin position="382"/>
        <end position="387"/>
    </location>
    <ligand>
        <name>ATP</name>
        <dbReference type="ChEBI" id="CHEBI:30616"/>
    </ligand>
</feature>
<feature type="binding site" evidence="7">
    <location>
        <position position="382"/>
    </location>
    <ligand>
        <name>Mg(2+)</name>
        <dbReference type="ChEBI" id="CHEBI:18420"/>
        <label>1</label>
        <note>catalytic</note>
    </ligand>
</feature>
<feature type="binding site" evidence="7">
    <location>
        <position position="382"/>
    </location>
    <ligand>
        <name>Mg(2+)</name>
        <dbReference type="ChEBI" id="CHEBI:18420"/>
        <label>2</label>
        <note>catalytic</note>
    </ligand>
</feature>
<feature type="binding site" evidence="7">
    <location>
        <position position="383"/>
    </location>
    <ligand>
        <name>Mg(2+)</name>
        <dbReference type="ChEBI" id="CHEBI:18420"/>
        <label>2</label>
        <note>catalytic</note>
    </ligand>
</feature>
<feature type="binding site" evidence="3">
    <location>
        <begin position="424"/>
        <end position="426"/>
    </location>
    <ligand>
        <name>ATP</name>
        <dbReference type="ChEBI" id="CHEBI:30616"/>
    </ligand>
</feature>
<feature type="binding site" evidence="7">
    <location>
        <position position="426"/>
    </location>
    <ligand>
        <name>Mg(2+)</name>
        <dbReference type="ChEBI" id="CHEBI:18420"/>
        <label>1</label>
        <note>catalytic</note>
    </ligand>
</feature>
<feature type="binding site" evidence="7">
    <location>
        <position position="426"/>
    </location>
    <ligand>
        <name>Mg(2+)</name>
        <dbReference type="ChEBI" id="CHEBI:18420"/>
        <label>2</label>
        <note>catalytic</note>
    </ligand>
</feature>
<feature type="binding site" evidence="3">
    <location>
        <position position="470"/>
    </location>
    <ligand>
        <name>ATP</name>
        <dbReference type="ChEBI" id="CHEBI:30616"/>
    </ligand>
</feature>
<feature type="binding site" evidence="2">
    <location>
        <position position="1029"/>
    </location>
    <ligand>
        <name>ATP</name>
        <dbReference type="ChEBI" id="CHEBI:30616"/>
    </ligand>
</feature>
<feature type="binding site" evidence="2">
    <location>
        <begin position="1103"/>
        <end position="1105"/>
    </location>
    <ligand>
        <name>ATP</name>
        <dbReference type="ChEBI" id="CHEBI:30616"/>
    </ligand>
</feature>
<feature type="binding site" evidence="2">
    <location>
        <begin position="1110"/>
        <end position="1114"/>
    </location>
    <ligand>
        <name>ATP</name>
        <dbReference type="ChEBI" id="CHEBI:30616"/>
    </ligand>
</feature>
<feature type="binding site" evidence="2">
    <location>
        <position position="1150"/>
    </location>
    <ligand>
        <name>ATP</name>
        <dbReference type="ChEBI" id="CHEBI:30616"/>
    </ligand>
</feature>
<feature type="modified residue" description="Phosphoserine" evidence="16">
    <location>
        <position position="53"/>
    </location>
</feature>
<feature type="modified residue" description="Phosphoserine; by PKC; in vitro" evidence="8">
    <location>
        <position position="554"/>
    </location>
</feature>
<feature type="modified residue" description="Phosphoserine" evidence="16">
    <location>
        <position position="574"/>
    </location>
</feature>
<feature type="modified residue" description="Phosphoserine; by PKA; in vitro" evidence="13">
    <location>
        <position position="660"/>
    </location>
</feature>
<feature type="modified residue" description="Phosphoserine; by PKC; in vitro" evidence="8">
    <location>
        <position position="660"/>
    </location>
</feature>
<feature type="modified residue" description="Phosphothreonine; by PKC; in vitro" evidence="8">
    <location>
        <position position="917"/>
    </location>
</feature>
<feature type="glycosylation site" description="N-linked (GlcNAc...) asparagine" evidence="6">
    <location>
        <position position="791"/>
    </location>
</feature>
<feature type="glycosylation site" description="N-linked (GlcNAc...) asparagine" evidence="6">
    <location>
        <position position="876"/>
    </location>
</feature>
<feature type="mutagenesis site" description="No effect on phosphorylation by PKC." evidence="8">
    <original>S</original>
    <variation>A</variation>
    <location>
        <position position="311"/>
    </location>
</feature>
<feature type="mutagenesis site" description="Reduces phosphorylation by PKC and PKC-mediated inhibition." evidence="8">
    <original>S</original>
    <variation>A</variation>
    <location>
        <position position="554"/>
    </location>
</feature>
<feature type="mutagenesis site" description="Abolishes phosphorylation by PKA and PKA-mediated down-regulation of enzyme activity." evidence="13">
    <original>S</original>
    <variation>A</variation>
    <location>
        <position position="660"/>
    </location>
</feature>
<feature type="mutagenesis site" description="Reduces phosphorylation by PKC and PKC-mediated inhibition." evidence="8">
    <original>S</original>
    <variation>A</variation>
    <location>
        <position position="660"/>
    </location>
</feature>
<feature type="mutagenesis site" description="Reduces phosphorylation by PKC, abolishes PKC-mediated inhibition." evidence="8">
    <original>T</original>
    <variation>A</variation>
    <location>
        <position position="917"/>
    </location>
</feature>
<feature type="sequence conflict" description="In Ref. 2; AAA40678." evidence="15" ref="2">
    <original>K</original>
    <variation>E</variation>
    <location>
        <position position="80"/>
    </location>
</feature>
<feature type="sequence conflict" description="In Ref. 2; AAA40678." evidence="15" ref="2">
    <original>R</original>
    <variation>P</variation>
    <location>
        <position position="130"/>
    </location>
</feature>
<feature type="sequence conflict" description="In Ref. 2; AAA40678." evidence="15" ref="2">
    <original>G</original>
    <variation>A</variation>
    <location>
        <position position="538"/>
    </location>
</feature>
<feature type="sequence conflict" description="In Ref. 2; AAA40678." evidence="15" ref="2">
    <original>I</original>
    <variation>L</variation>
    <location>
        <position position="790"/>
    </location>
</feature>
<organism>
    <name type="scientific">Rattus norvegicus</name>
    <name type="common">Rat</name>
    <dbReference type="NCBI Taxonomy" id="10116"/>
    <lineage>
        <taxon>Eukaryota</taxon>
        <taxon>Metazoa</taxon>
        <taxon>Chordata</taxon>
        <taxon>Craniata</taxon>
        <taxon>Vertebrata</taxon>
        <taxon>Euteleostomi</taxon>
        <taxon>Mammalia</taxon>
        <taxon>Eutheria</taxon>
        <taxon>Euarchontoglires</taxon>
        <taxon>Glires</taxon>
        <taxon>Rodentia</taxon>
        <taxon>Myomorpha</taxon>
        <taxon>Muroidea</taxon>
        <taxon>Muridae</taxon>
        <taxon>Murinae</taxon>
        <taxon>Rattus</taxon>
    </lineage>
</organism>
<dbReference type="EC" id="4.6.1.1" evidence="9 10 11 12 13"/>
<dbReference type="EMBL" id="L01115">
    <property type="protein sequence ID" value="AAA40676.1"/>
    <property type="molecule type" value="mRNA"/>
</dbReference>
<dbReference type="EMBL" id="M96160">
    <property type="protein sequence ID" value="AAA40678.1"/>
    <property type="status" value="ALT_INIT"/>
    <property type="molecule type" value="mRNA"/>
</dbReference>
<dbReference type="PIR" id="A47202">
    <property type="entry name" value="A47202"/>
</dbReference>
<dbReference type="RefSeq" id="NP_036953.4">
    <property type="nucleotide sequence ID" value="NM_012821.4"/>
</dbReference>
<dbReference type="SMR" id="Q03343"/>
<dbReference type="FunCoup" id="Q03343">
    <property type="interactions" value="670"/>
</dbReference>
<dbReference type="IntAct" id="Q03343">
    <property type="interactions" value="2"/>
</dbReference>
<dbReference type="STRING" id="10116.ENSRNOP00000072881"/>
<dbReference type="BindingDB" id="Q03343"/>
<dbReference type="ChEMBL" id="CHEMBL2095179"/>
<dbReference type="DrugCentral" id="Q03343"/>
<dbReference type="GlyCosmos" id="Q03343">
    <property type="glycosylation" value="2 sites, No reported glycans"/>
</dbReference>
<dbReference type="GlyGen" id="Q03343">
    <property type="glycosylation" value="3 sites"/>
</dbReference>
<dbReference type="iPTMnet" id="Q03343"/>
<dbReference type="PhosphoSitePlus" id="Q03343"/>
<dbReference type="SwissPalm" id="Q03343"/>
<dbReference type="PaxDb" id="10116-ENSRNOP00000016624"/>
<dbReference type="GeneID" id="25289"/>
<dbReference type="KEGG" id="rno:25289"/>
<dbReference type="UCSC" id="RGD:2035">
    <property type="organism name" value="rat"/>
</dbReference>
<dbReference type="AGR" id="RGD:2035"/>
<dbReference type="CTD" id="112"/>
<dbReference type="RGD" id="2035">
    <property type="gene designation" value="Adcy6"/>
</dbReference>
<dbReference type="eggNOG" id="KOG3619">
    <property type="taxonomic scope" value="Eukaryota"/>
</dbReference>
<dbReference type="InParanoid" id="Q03343"/>
<dbReference type="PhylomeDB" id="Q03343"/>
<dbReference type="Reactome" id="R-RNO-163615">
    <property type="pathway name" value="PKA activation"/>
</dbReference>
<dbReference type="Reactome" id="R-RNO-170660">
    <property type="pathway name" value="Adenylate cyclase activating pathway"/>
</dbReference>
<dbReference type="Reactome" id="R-RNO-170670">
    <property type="pathway name" value="Adenylate cyclase inhibitory pathway"/>
</dbReference>
<dbReference type="Reactome" id="R-RNO-400042">
    <property type="pathway name" value="Adrenaline,noradrenaline inhibits insulin secretion"/>
</dbReference>
<dbReference type="Reactome" id="R-RNO-418597">
    <property type="pathway name" value="G alpha (z) signalling events"/>
</dbReference>
<dbReference type="Reactome" id="R-RNO-5610787">
    <property type="pathway name" value="Hedgehog 'off' state"/>
</dbReference>
<dbReference type="PRO" id="PR:Q03343"/>
<dbReference type="Proteomes" id="UP000002494">
    <property type="component" value="Unplaced"/>
</dbReference>
<dbReference type="GO" id="GO:0005929">
    <property type="term" value="C:cilium"/>
    <property type="evidence" value="ECO:0007669"/>
    <property type="project" value="UniProtKB-SubCell"/>
</dbReference>
<dbReference type="GO" id="GO:0005768">
    <property type="term" value="C:endosome"/>
    <property type="evidence" value="ECO:0000314"/>
    <property type="project" value="RGD"/>
</dbReference>
<dbReference type="GO" id="GO:0016020">
    <property type="term" value="C:membrane"/>
    <property type="evidence" value="ECO:0000314"/>
    <property type="project" value="BHF-UCL"/>
</dbReference>
<dbReference type="GO" id="GO:0031528">
    <property type="term" value="C:microvillus membrane"/>
    <property type="evidence" value="ECO:0000314"/>
    <property type="project" value="RGD"/>
</dbReference>
<dbReference type="GO" id="GO:0005886">
    <property type="term" value="C:plasma membrane"/>
    <property type="evidence" value="ECO:0000314"/>
    <property type="project" value="ParkinsonsUK-UCL"/>
</dbReference>
<dbReference type="GO" id="GO:0042383">
    <property type="term" value="C:sarcolemma"/>
    <property type="evidence" value="ECO:0000314"/>
    <property type="project" value="RGD"/>
</dbReference>
<dbReference type="GO" id="GO:0032420">
    <property type="term" value="C:stereocilium"/>
    <property type="evidence" value="ECO:0007669"/>
    <property type="project" value="UniProtKB-SubCell"/>
</dbReference>
<dbReference type="GO" id="GO:0004016">
    <property type="term" value="F:adenylate cyclase activity"/>
    <property type="evidence" value="ECO:0000314"/>
    <property type="project" value="BHF-UCL"/>
</dbReference>
<dbReference type="GO" id="GO:0005524">
    <property type="term" value="F:ATP binding"/>
    <property type="evidence" value="ECO:0007669"/>
    <property type="project" value="UniProtKB-KW"/>
</dbReference>
<dbReference type="GO" id="GO:0008294">
    <property type="term" value="F:calcium- and calmodulin-responsive adenylate cyclase activity"/>
    <property type="evidence" value="ECO:0000314"/>
    <property type="project" value="RGD"/>
</dbReference>
<dbReference type="GO" id="GO:0046872">
    <property type="term" value="F:metal ion binding"/>
    <property type="evidence" value="ECO:0007669"/>
    <property type="project" value="UniProtKB-KW"/>
</dbReference>
<dbReference type="GO" id="GO:0019901">
    <property type="term" value="F:protein kinase binding"/>
    <property type="evidence" value="ECO:0000353"/>
    <property type="project" value="BHF-UCL"/>
</dbReference>
<dbReference type="GO" id="GO:0005080">
    <property type="term" value="F:protein kinase C binding"/>
    <property type="evidence" value="ECO:0000266"/>
    <property type="project" value="RGD"/>
</dbReference>
<dbReference type="GO" id="GO:0097110">
    <property type="term" value="F:scaffold protein binding"/>
    <property type="evidence" value="ECO:0000266"/>
    <property type="project" value="RGD"/>
</dbReference>
<dbReference type="GO" id="GO:0005102">
    <property type="term" value="F:signaling receptor binding"/>
    <property type="evidence" value="ECO:0000353"/>
    <property type="project" value="RGD"/>
</dbReference>
<dbReference type="GO" id="GO:0000149">
    <property type="term" value="F:SNARE binding"/>
    <property type="evidence" value="ECO:0000314"/>
    <property type="project" value="ParkinsonsUK-UCL"/>
</dbReference>
<dbReference type="GO" id="GO:0007191">
    <property type="term" value="P:adenylate cyclase-activating dopamine receptor signaling pathway"/>
    <property type="evidence" value="ECO:0000266"/>
    <property type="project" value="RGD"/>
</dbReference>
<dbReference type="GO" id="GO:0007189">
    <property type="term" value="P:adenylate cyclase-activating G protein-coupled receptor signaling pathway"/>
    <property type="evidence" value="ECO:0000250"/>
    <property type="project" value="UniProtKB"/>
</dbReference>
<dbReference type="GO" id="GO:0007192">
    <property type="term" value="P:adenylate cyclase-activating serotonin receptor signaling pathway"/>
    <property type="evidence" value="ECO:0000266"/>
    <property type="project" value="RGD"/>
</dbReference>
<dbReference type="GO" id="GO:0097746">
    <property type="term" value="P:blood vessel diameter maintenance"/>
    <property type="evidence" value="ECO:0000266"/>
    <property type="project" value="RGD"/>
</dbReference>
<dbReference type="GO" id="GO:0006171">
    <property type="term" value="P:cAMP biosynthetic process"/>
    <property type="evidence" value="ECO:0000314"/>
    <property type="project" value="RGD"/>
</dbReference>
<dbReference type="GO" id="GO:0071870">
    <property type="term" value="P:cellular response to catecholamine stimulus"/>
    <property type="evidence" value="ECO:0000266"/>
    <property type="project" value="RGD"/>
</dbReference>
<dbReference type="GO" id="GO:1904322">
    <property type="term" value="P:cellular response to forskolin"/>
    <property type="evidence" value="ECO:0000250"/>
    <property type="project" value="UniProtKB"/>
</dbReference>
<dbReference type="GO" id="GO:0071380">
    <property type="term" value="P:cellular response to prostaglandin E stimulus"/>
    <property type="evidence" value="ECO:0000266"/>
    <property type="project" value="RGD"/>
</dbReference>
<dbReference type="GO" id="GO:1904117">
    <property type="term" value="P:cellular response to vasopressin"/>
    <property type="evidence" value="ECO:0000250"/>
    <property type="project" value="UniProtKB"/>
</dbReference>
<dbReference type="GO" id="GO:0007623">
    <property type="term" value="P:circadian rhythm"/>
    <property type="evidence" value="ECO:0000270"/>
    <property type="project" value="RGD"/>
</dbReference>
<dbReference type="GO" id="GO:0035556">
    <property type="term" value="P:intracellular signal transduction"/>
    <property type="evidence" value="ECO:0007669"/>
    <property type="project" value="InterPro"/>
</dbReference>
<dbReference type="GO" id="GO:0072660">
    <property type="term" value="P:maintenance of protein location in plasma membrane"/>
    <property type="evidence" value="ECO:0000315"/>
    <property type="project" value="ParkinsonsUK-UCL"/>
</dbReference>
<dbReference type="GO" id="GO:0010977">
    <property type="term" value="P:negative regulation of neuron projection development"/>
    <property type="evidence" value="ECO:0000315"/>
    <property type="project" value="ParkinsonsUK-UCL"/>
</dbReference>
<dbReference type="GO" id="GO:0035811">
    <property type="term" value="P:negative regulation of urine volume"/>
    <property type="evidence" value="ECO:0000250"/>
    <property type="project" value="UniProtKB"/>
</dbReference>
<dbReference type="GO" id="GO:0003091">
    <property type="term" value="P:renal water homeostasis"/>
    <property type="evidence" value="ECO:0000250"/>
    <property type="project" value="UniProtKB"/>
</dbReference>
<dbReference type="CDD" id="cd07302">
    <property type="entry name" value="CHD"/>
    <property type="match status" value="1"/>
</dbReference>
<dbReference type="CDD" id="cd07556">
    <property type="entry name" value="Nucleotidyl_cyc_III"/>
    <property type="match status" value="1"/>
</dbReference>
<dbReference type="FunFam" id="3.30.70.1230:FF:000001">
    <property type="entry name" value="Adenylate cyclase"/>
    <property type="match status" value="1"/>
</dbReference>
<dbReference type="FunFam" id="3.30.70.1230:FF:000002">
    <property type="entry name" value="Adenylate cyclase"/>
    <property type="match status" value="1"/>
</dbReference>
<dbReference type="Gene3D" id="3.30.70.1230">
    <property type="entry name" value="Nucleotide cyclase"/>
    <property type="match status" value="2"/>
</dbReference>
<dbReference type="InterPro" id="IPR001054">
    <property type="entry name" value="A/G_cyclase"/>
</dbReference>
<dbReference type="InterPro" id="IPR018297">
    <property type="entry name" value="A/G_cyclase_CS"/>
</dbReference>
<dbReference type="InterPro" id="IPR032628">
    <property type="entry name" value="AC_N"/>
</dbReference>
<dbReference type="InterPro" id="IPR030672">
    <property type="entry name" value="Adcy"/>
</dbReference>
<dbReference type="InterPro" id="IPR009398">
    <property type="entry name" value="Adcy_conserved_dom"/>
</dbReference>
<dbReference type="InterPro" id="IPR029787">
    <property type="entry name" value="Nucleotide_cyclase"/>
</dbReference>
<dbReference type="PANTHER" id="PTHR45627">
    <property type="entry name" value="ADENYLATE CYCLASE TYPE 1"/>
    <property type="match status" value="1"/>
</dbReference>
<dbReference type="PANTHER" id="PTHR45627:SF11">
    <property type="entry name" value="ADENYLATE CYCLASE TYPE 6"/>
    <property type="match status" value="1"/>
</dbReference>
<dbReference type="Pfam" id="PF16214">
    <property type="entry name" value="AC_N"/>
    <property type="match status" value="1"/>
</dbReference>
<dbReference type="Pfam" id="PF06327">
    <property type="entry name" value="Adcy_cons_dom"/>
    <property type="match status" value="1"/>
</dbReference>
<dbReference type="Pfam" id="PF00211">
    <property type="entry name" value="Guanylate_cyc"/>
    <property type="match status" value="2"/>
</dbReference>
<dbReference type="PIRSF" id="PIRSF039050">
    <property type="entry name" value="Ade_cyc"/>
    <property type="match status" value="1"/>
</dbReference>
<dbReference type="SMART" id="SM00044">
    <property type="entry name" value="CYCc"/>
    <property type="match status" value="2"/>
</dbReference>
<dbReference type="SUPFAM" id="SSF55073">
    <property type="entry name" value="Nucleotide cyclase"/>
    <property type="match status" value="2"/>
</dbReference>
<dbReference type="PROSITE" id="PS00452">
    <property type="entry name" value="GUANYLATE_CYCLASE_1"/>
    <property type="match status" value="2"/>
</dbReference>
<dbReference type="PROSITE" id="PS50125">
    <property type="entry name" value="GUANYLATE_CYCLASE_2"/>
    <property type="match status" value="2"/>
</dbReference>
<reference key="1">
    <citation type="journal article" date="1992" name="J. Biol. Chem.">
        <title>Molecular diversity in the adenylylcyclase family. Evidence for eight forms of the enzyme and cloning of type VI.</title>
        <authorList>
            <person name="Krupinski J."/>
            <person name="Lehman T.C."/>
            <person name="Frankenfield C.D."/>
            <person name="Zwaagstra J.C."/>
            <person name="Watson P.A."/>
        </authorList>
    </citation>
    <scope>NUCLEOTIDE SEQUENCE [MRNA]</scope>
</reference>
<reference key="2">
    <citation type="journal article" date="1992" name="Proc. Natl. Acad. Sci. U.S.A.">
        <title>Two members of a widely expressed subfamily of hormone-stimulated adenylyl cyclases.</title>
        <authorList>
            <person name="Premont R.T."/>
            <person name="Chen J."/>
            <person name="Ma H.-W."/>
            <person name="Ponnapalli M."/>
            <person name="Iyengar R."/>
        </authorList>
    </citation>
    <scope>NUCLEOTIDE SEQUENCE [MRNA]</scope>
    <scope>FUNCTION</scope>
    <scope>CATALYTIC ACTIVITY</scope>
    <scope>ACTIVITY REGULATION</scope>
    <scope>TISSUE SPECIFICITY</scope>
    <source>
        <tissue>Liver</tissue>
    </source>
</reference>
<reference key="3">
    <citation type="journal article" date="1997" name="Proc. Natl. Acad. Sci. U.S.A.">
        <title>Adenylyl cyclase 6 is selectively regulated by protein kinase A phosphorylation in a region involved in Galphas stimulation.</title>
        <authorList>
            <person name="Chen Y."/>
            <person name="Harry A."/>
            <person name="Li J."/>
            <person name="Smit M.J."/>
            <person name="Bai X."/>
            <person name="Magnusson R."/>
            <person name="Pieroni J.P."/>
            <person name="Weng G."/>
            <person name="Iyengar R."/>
        </authorList>
    </citation>
    <scope>FUNCTION</scope>
    <scope>CATALYTIC ACTIVITY</scope>
    <scope>COFACTOR</scope>
    <scope>SUBCELLULAR LOCATION</scope>
    <scope>ACTIVITY REGULATION</scope>
    <scope>MUTAGENESIS OF SER-660</scope>
    <scope>PHOSPHORYLATION AT SER-660</scope>
</reference>
<reference key="4">
    <citation type="journal article" date="2002" name="J. Biol. Chem.">
        <title>Protein kinase C inhibits type VI adenylyl cyclase by phosphorylating the regulatory N domain and two catalytic C1 and C2 domains.</title>
        <authorList>
            <person name="Lin T.-H."/>
            <person name="Lai H.-L."/>
            <person name="Kao Y.-Y."/>
            <person name="Sun C.-N."/>
            <person name="Hwang M.-J."/>
            <person name="Chern Y."/>
        </authorList>
    </citation>
    <scope>PHOSPHORYLATION AT SER-554; SER-660 AND THR-917</scope>
    <scope>MUTAGENESIS OF SER-311; SER-554; SER-660 AND THR-917</scope>
</reference>
<reference key="5">
    <citation type="journal article" date="2004" name="Mol. Pharmacol.">
        <title>Raf kinase activation of adenylyl cyclases: isoform-selective regulation.</title>
        <authorList>
            <person name="Ding Q."/>
            <person name="Gros R."/>
            <person name="Gray I.D."/>
            <person name="Taussig R."/>
            <person name="Ferguson S.S."/>
            <person name="Feldman R.D."/>
        </authorList>
    </citation>
    <scope>FUNCTION</scope>
    <scope>CATALYTIC ACTIVITY</scope>
    <scope>COFACTOR</scope>
    <scope>PHOSPHORYLATION BY RAF1</scope>
    <scope>INTERACTION WITH RAF1</scope>
    <scope>ACTIVITY REGULATION</scope>
</reference>
<reference key="6">
    <citation type="journal article" date="2007" name="J. Biol. Chem.">
        <title>Conditional stimulation of type V and VI adenylyl cyclases by G protein betagamma subunits.</title>
        <authorList>
            <person name="Gao X."/>
            <person name="Sadana R."/>
            <person name="Dessauer C.W."/>
            <person name="Patel T.B."/>
        </authorList>
    </citation>
    <scope>CATALYTIC ACTIVITY</scope>
    <scope>FUNCTION</scope>
    <scope>ACTIVITY REGULATION</scope>
    <scope>SUBCELLULAR LOCATION</scope>
</reference>
<reference key="7">
    <citation type="journal article" date="2011" name="Cardiovasc. Res.">
        <title>Principal role of adenylyl cyclase 6 in K? channel regulation and vasodilator signalling in vascular smooth muscle cells.</title>
        <authorList>
            <person name="Nelson C.P."/>
            <person name="Rainbow R.D."/>
            <person name="Brignell J.L."/>
            <person name="Perry M.D."/>
            <person name="Willets J.M."/>
            <person name="Davies N.W."/>
            <person name="Standen N.B."/>
            <person name="Challiss R.A."/>
        </authorList>
    </citation>
    <scope>FUNCTION</scope>
    <scope>CATALYTIC ACTIVITY</scope>
    <scope>ACTIVITY REGULATION</scope>
    <scope>TISSUE SPECIFICITY</scope>
</reference>
<reference key="8">
    <citation type="journal article" date="2012" name="Nat. Commun.">
        <title>Quantitative maps of protein phosphorylation sites across 14 different rat organs and tissues.</title>
        <authorList>
            <person name="Lundby A."/>
            <person name="Secher A."/>
            <person name="Lage K."/>
            <person name="Nordsborg N.B."/>
            <person name="Dmytriyev A."/>
            <person name="Lundby C."/>
            <person name="Olsen J.V."/>
        </authorList>
    </citation>
    <scope>PHOSPHORYLATION [LARGE SCALE ANALYSIS] AT SER-53 AND SER-574</scope>
    <scope>IDENTIFICATION BY MASS SPECTROMETRY [LARGE SCALE ANALYSIS]</scope>
</reference>
<gene>
    <name type="primary">Adcy6</name>
</gene>
<accession>Q03343</accession>
<proteinExistence type="evidence at protein level"/>